<protein>
    <recommendedName>
        <fullName>Maximins-S type B/C</fullName>
    </recommendedName>
    <component>
        <recommendedName>
            <fullName>Maximin-S1</fullName>
        </recommendedName>
    </component>
    <component>
        <recommendedName>
            <fullName>Maximin-S3</fullName>
        </recommendedName>
    </component>
    <component>
        <recommendedName>
            <fullName>Maximin-S5</fullName>
        </recommendedName>
    </component>
    <component>
        <recommendedName>
            <fullName>Maximin-S2</fullName>
        </recommendedName>
    </component>
    <component>
        <recommendedName>
            <fullName>Maximin-S4</fullName>
        </recommendedName>
    </component>
</protein>
<comment type="function">
    <text>Maximin-S1 has no antimicrobial activity. Has no hemolytic activity.</text>
</comment>
<comment type="function">
    <text evidence="1">Maximin-S2 has an activity against mycoplasma but has no activity against common Gram-positive and Gram-negative bacteria nor fungi. Has no hemolytic activity (By similarity).</text>
</comment>
<comment type="function">
    <text evidence="1">Maximin-S3 has an activity against mycoplasma but has no activity against common Gram-positive and Gram-negative bacteria nor fungi. Has no hemolytic activity (By similarity).</text>
</comment>
<comment type="function">
    <text>Maximin-S4 has an activity against mycoplasma but has no activity against common Gram-positive and Gram-negative bacteria nor fungi. Has no hemolytic activity.</text>
</comment>
<comment type="function">
    <text evidence="1">Maximin-S5 has an activity against mycoplasma but has no activity against common Gram-positive and Gram-negative bacteria nor fungi. Has no hemolytic activity (By similarity).</text>
</comment>
<comment type="subcellular location">
    <subcellularLocation>
        <location>Secreted</location>
    </subcellularLocation>
</comment>
<comment type="alternative products">
    <event type="alternative splicing"/>
    <isoform>
        <id>Q5GC92-1</id>
        <name>B</name>
        <sequence type="displayed"/>
    </isoform>
    <isoform>
        <id>Q5GC92-2</id>
        <name>C</name>
        <sequence type="described" ref="VSP_013916"/>
    </isoform>
</comment>
<comment type="tissue specificity">
    <text>Expressed by the skin dorsal glands.</text>
</comment>
<comment type="mass spectrometry">
    <molecule>Maximin-S3</molecule>
    <text>Maximin-S2.</text>
</comment>
<comment type="mass spectrometry">
    <molecule>Maximin-S3</molecule>
    <text>Maximin-S3.</text>
</comment>
<comment type="mass spectrometry">
    <molecule>Maximin-S2</molecule>
    <text>Maximin-S4.</text>
</comment>
<comment type="mass spectrometry">
    <molecule>Maximin-S3</molecule>
    <text>Maximin-S5.</text>
</comment>
<comment type="similarity">
    <text evidence="4">Belongs to the maximin-S family.</text>
</comment>
<dbReference type="EMBL" id="AY652773">
    <property type="protein sequence ID" value="AAV97981.1"/>
    <property type="molecule type" value="mRNA"/>
</dbReference>
<dbReference type="EMBL" id="AY652772">
    <property type="protein sequence ID" value="AAV97980.1"/>
    <property type="molecule type" value="mRNA"/>
</dbReference>
<dbReference type="SMR" id="Q5GC92"/>
<dbReference type="GO" id="GO:0005576">
    <property type="term" value="C:extracellular region"/>
    <property type="evidence" value="ECO:0007669"/>
    <property type="project" value="UniProtKB-SubCell"/>
</dbReference>
<dbReference type="GO" id="GO:0042742">
    <property type="term" value="P:defense response to bacterium"/>
    <property type="evidence" value="ECO:0007669"/>
    <property type="project" value="UniProtKB-KW"/>
</dbReference>
<sequence>MNFNYFILVLFFITSGHAKSETREVHQEAENHIKRGSNTGFNFKTLDKEKRSAEEQNLAEHLVTRGSNKGFNFMVDMINALSNGKRSAEEQDLAEHLVTRGSNKGFNFMVDMINALSNGKRSAEEQDLAEDLVTRGSNKGFNFMVDMIQALSKGKRSAEDQDLAEDLVTRGSNKGFNFMVDMIQALSNGKRSAEEQDLAEHLVTRGSNKGFNFMVDMINALSNGKRSAEEQDLSEDLVTRGSNKGFNFMVDMINALSNGKRSAEEQDLVEDLVTRRSNKGFNFMVDMIQALSKGKRSAEQEKDMK</sequence>
<proteinExistence type="evidence at protein level"/>
<feature type="signal peptide" evidence="2">
    <location>
        <begin position="1"/>
        <end position="18"/>
    </location>
</feature>
<feature type="propeptide" id="PRO_0000010268">
    <location>
        <begin position="19"/>
        <end position="35"/>
    </location>
</feature>
<feature type="peptide" id="PRO_0000010269" description="Maximin-S1">
    <location>
        <begin position="36"/>
        <end position="49"/>
    </location>
</feature>
<feature type="propeptide" id="PRO_0000010270">
    <location>
        <begin position="52"/>
        <end position="65"/>
    </location>
</feature>
<feature type="peptide" id="PRO_0000010271" description="Maximin-S3">
    <location>
        <begin position="66"/>
        <end position="83"/>
    </location>
</feature>
<feature type="propeptide" id="PRO_0000010272">
    <location>
        <begin position="87"/>
        <end position="100"/>
    </location>
</feature>
<feature type="peptide" id="PRO_0000010273" description="Maximin-S3">
    <location>
        <begin position="101"/>
        <end position="118"/>
    </location>
</feature>
<feature type="propeptide" id="PRO_0000010274">
    <location>
        <begin position="122"/>
        <end position="135"/>
    </location>
</feature>
<feature type="peptide" id="PRO_0000010275" description="Maximin-S5">
    <location>
        <begin position="136"/>
        <end position="153"/>
    </location>
</feature>
<feature type="propeptide" id="PRO_0000010276">
    <location>
        <begin position="157"/>
        <end position="170"/>
    </location>
</feature>
<feature type="peptide" id="PRO_0000010277" description="Maximin-S2">
    <location>
        <begin position="171"/>
        <end position="188"/>
    </location>
</feature>
<feature type="propeptide" id="PRO_0000010278">
    <location>
        <begin position="192"/>
        <end position="205"/>
    </location>
</feature>
<feature type="peptide" id="PRO_0000010279" description="Maximin-S3">
    <location>
        <begin position="206"/>
        <end position="223"/>
    </location>
</feature>
<feature type="propeptide" id="PRO_0000010280">
    <location>
        <begin position="227"/>
        <end position="240"/>
    </location>
</feature>
<feature type="peptide" id="PRO_0000010281" description="Maximin-S3">
    <location>
        <begin position="241"/>
        <end position="258"/>
    </location>
</feature>
<feature type="propeptide" id="PRO_0000010282">
    <location>
        <begin position="262"/>
        <end position="275"/>
    </location>
</feature>
<feature type="peptide" id="PRO_0000010283" description="Maximin-S4">
    <location>
        <begin position="276"/>
        <end position="293"/>
    </location>
</feature>
<feature type="propeptide" id="PRO_0000010284">
    <location>
        <begin position="297"/>
        <end position="305"/>
    </location>
</feature>
<feature type="modified residue" description="Asparagine amide" evidence="3">
    <location>
        <position position="83"/>
    </location>
</feature>
<feature type="modified residue" description="Asparagine amide" evidence="3">
    <location>
        <position position="118"/>
    </location>
</feature>
<feature type="modified residue" description="Lysine amide" evidence="3">
    <location>
        <position position="153"/>
    </location>
</feature>
<feature type="modified residue" description="Asparagine amide" evidence="3">
    <location>
        <position position="188"/>
    </location>
</feature>
<feature type="modified residue" description="Asparagine amide" evidence="3">
    <location>
        <position position="223"/>
    </location>
</feature>
<feature type="modified residue" description="Asparagine amide" evidence="3">
    <location>
        <position position="258"/>
    </location>
</feature>
<feature type="modified residue" description="Lysine amide" evidence="3">
    <location>
        <position position="293"/>
    </location>
</feature>
<feature type="splice variant" id="VSP_013916" description="In isoform C." evidence="4">
    <location>
        <begin position="127"/>
        <end position="266"/>
    </location>
</feature>
<organism>
    <name type="scientific">Bombina maxima</name>
    <name type="common">Giant fire-bellied toad</name>
    <name type="synonym">Chinese red belly toad</name>
    <dbReference type="NCBI Taxonomy" id="161274"/>
    <lineage>
        <taxon>Eukaryota</taxon>
        <taxon>Metazoa</taxon>
        <taxon>Chordata</taxon>
        <taxon>Craniata</taxon>
        <taxon>Vertebrata</taxon>
        <taxon>Euteleostomi</taxon>
        <taxon>Amphibia</taxon>
        <taxon>Batrachia</taxon>
        <taxon>Anura</taxon>
        <taxon>Bombinatoridae</taxon>
        <taxon>Bombina</taxon>
    </lineage>
</organism>
<evidence type="ECO:0000250" key="1"/>
<evidence type="ECO:0000255" key="2"/>
<evidence type="ECO:0000269" key="3">
    <source>
    </source>
</evidence>
<evidence type="ECO:0000305" key="4"/>
<keyword id="KW-0025">Alternative splicing</keyword>
<keyword id="KW-0027">Amidation</keyword>
<keyword id="KW-0044">Antibiotic</keyword>
<keyword id="KW-0929">Antimicrobial</keyword>
<keyword id="KW-0165">Cleavage on pair of basic residues</keyword>
<keyword id="KW-0964">Secreted</keyword>
<keyword id="KW-0732">Signal</keyword>
<name>MAXSB_BOMMX</name>
<accession>Q5GC92</accession>
<accession>Q5GC93</accession>
<reference key="1">
    <citation type="journal article" date="2005" name="Biochem. Biophys. Res. Commun.">
        <title>Maximins S, a novel group of antimicrobial peptides from toad Bombina maxima.</title>
        <authorList>
            <person name="Wang T."/>
            <person name="Zhang J."/>
            <person name="Shen J.-H."/>
            <person name="Jin Y."/>
            <person name="Lee W.-H."/>
            <person name="Zhang Y."/>
        </authorList>
    </citation>
    <scope>NUCLEOTIDE SEQUENCE [MRNA]</scope>
    <scope>SYNTHESIS OF MAXIMIN-S1</scope>
    <scope>SYNTHESIS OF MAXIMIN-S4</scope>
    <scope>AMIDATION AT ASN-83; ASN-118; LYS-153; ASN-188; ASN-223; ASN-258 AND LYS-293</scope>
    <scope>MASS SPECTROMETRY</scope>
    <source>
        <tissue>Skin</tissue>
        <tissue>Skin secretion</tissue>
    </source>
</reference>